<feature type="chain" id="PRO_0000222642" description="Capsid protein">
    <location>
        <begin position="1"/>
        <end position="304"/>
    </location>
</feature>
<feature type="region of interest" description="Disordered" evidence="1">
    <location>
        <begin position="1"/>
        <end position="54"/>
    </location>
</feature>
<feature type="compositionally biased region" description="Basic and acidic residues" evidence="1">
    <location>
        <begin position="1"/>
        <end position="24"/>
    </location>
</feature>
<feature type="compositionally biased region" description="Basic and acidic residues" evidence="1">
    <location>
        <begin position="32"/>
        <end position="54"/>
    </location>
</feature>
<protein>
    <recommendedName>
        <fullName>Capsid protein</fullName>
    </recommendedName>
    <alternativeName>
        <fullName>Coat protein</fullName>
        <shortName>CP</shortName>
    </alternativeName>
</protein>
<organism>
    <name type="scientific">Potato virus M (strain Russian)</name>
    <name type="common">PVM</name>
    <dbReference type="NCBI Taxonomy" id="12168"/>
    <lineage>
        <taxon>Viruses</taxon>
        <taxon>Riboviria</taxon>
        <taxon>Orthornavirae</taxon>
        <taxon>Kitrinoviricota</taxon>
        <taxon>Alsuviricetes</taxon>
        <taxon>Tymovirales</taxon>
        <taxon>Betaflexiviridae</taxon>
        <taxon>Quinvirinae</taxon>
        <taxon>Carlavirus</taxon>
        <taxon>Potato virus M</taxon>
    </lineage>
</organism>
<sequence length="304" mass="33930">MGDSTKKAETAKDEGTSQERREARPLPTAADFEGKDTSENTDGRAADADGEMSLERRLDSLREFLRERRGAIRVTNPGLETGRPRLQLAENMRPDPTNPYNRPSIEALSRIKPIAISNNMATSEDMMRIYVNLEGLGVPTEHVQQVVIQAVLFCKDASSSVFLDPRGSFEWPRGAITADAVLAVLKKDAETLRRVCRLYAPVTWNHMLTHNAPPADWAAMGFQYEDRFAAFDCFDYVENTAAVQPLEGLIRRPTPREKVAHNTHKDIAVRGANRNQVFSSLNAEVTGGMNGPELTRDYVKSNRK</sequence>
<accession>P17529</accession>
<comment type="function">
    <text>Required for genome encapsidation. Forms ribonucleoprotein complexes along with TGB1 helicase and viral RNA.</text>
</comment>
<comment type="subcellular location">
    <subcellularLocation>
        <location evidence="2">Virion</location>
    </subcellularLocation>
</comment>
<comment type="miscellaneous">
    <text>The N- and the C-terminus of this capsid protein may be exposed on the surface of the virus particle. The central core sequence may be important in maintaining correct tertiary structure of the capsid protein and/or play a role in interacting with the viral RNA.</text>
</comment>
<comment type="similarity">
    <text evidence="2">Belongs to the potexviruses coat protein family.</text>
</comment>
<proteinExistence type="inferred from homology"/>
<reference key="1">
    <citation type="journal article" date="1989" name="J. Gen. Virol.">
        <title>Partial nucleotide sequence of potato virus M RNA shows similarities to protexviruses in gene arrangement and the encoded amino acid sequences.</title>
        <authorList>
            <person name="Rupasov V.V."/>
            <person name="Morozov S.Y."/>
            <person name="Kanyuka K.V."/>
            <person name="Zavriev S.K."/>
        </authorList>
    </citation>
    <scope>NUCLEOTIDE SEQUENCE [GENOMIC RNA]</scope>
</reference>
<reference key="2">
    <citation type="journal article" date="1991" name="J. Gen. Virol.">
        <title>The genome organization of potato virus M RNA.</title>
        <authorList>
            <person name="Zavriev S.K."/>
            <person name="Kanyuka K.V."/>
            <person name="Levay K.E."/>
        </authorList>
    </citation>
    <scope>NUCLEOTIDE SEQUENCE [GENOMIC RNA]</scope>
</reference>
<reference key="3">
    <citation type="journal article" date="1991" name="Mol. Biol. (Mosk.)">
        <title>Complete nucleotide sequence of genomic RNA of the potato M-virus.</title>
        <authorList>
            <person name="Zavriev S.K."/>
            <person name="Kaniuka K.V."/>
            <person name="Levai K.E."/>
        </authorList>
    </citation>
    <scope>NUCLEOTIDE SEQUENCE [GENOMIC RNA]</scope>
</reference>
<reference key="4">
    <citation type="journal article" date="2005" name="Mol. Plant Microbe Interact.">
        <title>A new cell-to-cell transport model for Potexviruses.</title>
        <authorList>
            <person name="Verchot-Lubicz J."/>
        </authorList>
    </citation>
    <scope>REVIEW</scope>
</reference>
<name>CAPSD_PVMR</name>
<organismHost>
    <name type="scientific">Solanum tuberosum</name>
    <name type="common">Potato</name>
    <dbReference type="NCBI Taxonomy" id="4113"/>
</organismHost>
<evidence type="ECO:0000256" key="1">
    <source>
        <dbReference type="SAM" id="MobiDB-lite"/>
    </source>
</evidence>
<evidence type="ECO:0000305" key="2"/>
<keyword id="KW-0167">Capsid protein</keyword>
<keyword id="KW-1139">Helical capsid protein</keyword>
<keyword id="KW-1185">Reference proteome</keyword>
<keyword id="KW-0687">Ribonucleoprotein</keyword>
<keyword id="KW-0946">Virion</keyword>
<dbReference type="EMBL" id="D14449">
    <property type="protein sequence ID" value="BAA03343.1"/>
    <property type="molecule type" value="Genomic_RNA"/>
</dbReference>
<dbReference type="PIR" id="E54333">
    <property type="entry name" value="VCVYPM"/>
</dbReference>
<dbReference type="RefSeq" id="NP_056771.1">
    <property type="nucleotide sequence ID" value="NC_001361.2"/>
</dbReference>
<dbReference type="SMR" id="P17529"/>
<dbReference type="GeneID" id="1493991"/>
<dbReference type="KEGG" id="vg:1493991"/>
<dbReference type="Proteomes" id="UP000000677">
    <property type="component" value="Segment"/>
</dbReference>
<dbReference type="GO" id="GO:0019029">
    <property type="term" value="C:helical viral capsid"/>
    <property type="evidence" value="ECO:0007669"/>
    <property type="project" value="UniProtKB-KW"/>
</dbReference>
<dbReference type="GO" id="GO:1990904">
    <property type="term" value="C:ribonucleoprotein complex"/>
    <property type="evidence" value="ECO:0007669"/>
    <property type="project" value="UniProtKB-KW"/>
</dbReference>
<dbReference type="GO" id="GO:0005198">
    <property type="term" value="F:structural molecule activity"/>
    <property type="evidence" value="ECO:0007669"/>
    <property type="project" value="InterPro"/>
</dbReference>
<dbReference type="InterPro" id="IPR013569">
    <property type="entry name" value="Carlavirus_coat_N"/>
</dbReference>
<dbReference type="InterPro" id="IPR000052">
    <property type="entry name" value="Pltvir_coat"/>
</dbReference>
<dbReference type="Pfam" id="PF00286">
    <property type="entry name" value="Flexi_CP"/>
    <property type="match status" value="1"/>
</dbReference>
<dbReference type="Pfam" id="PF08358">
    <property type="entry name" value="Flexi_CP_N"/>
    <property type="match status" value="1"/>
</dbReference>
<dbReference type="PRINTS" id="PR00232">
    <property type="entry name" value="POTXCARLCOAT"/>
</dbReference>
<dbReference type="PROSITE" id="PS00418">
    <property type="entry name" value="POTEX_CARLAVIRUS_COAT"/>
    <property type="match status" value="1"/>
</dbReference>